<feature type="chain" id="PRO_0000327785" description="Cystatin-A1">
    <location>
        <begin position="1"/>
        <end position="94"/>
    </location>
</feature>
<feature type="short sequence motif" description="Secondary area of contact" evidence="1">
    <location>
        <begin position="45"/>
        <end position="49"/>
    </location>
</feature>
<feature type="site" description="Reactive site" evidence="1">
    <location>
        <position position="5"/>
    </location>
</feature>
<gene>
    <name type="primary">cpiA</name>
    <name type="ORF">DDB_G0291834</name>
</gene>
<evidence type="ECO:0000250" key="1"/>
<evidence type="ECO:0000269" key="2">
    <source>
    </source>
</evidence>
<evidence type="ECO:0000305" key="3"/>
<organism>
    <name type="scientific">Dictyostelium discoideum</name>
    <name type="common">Social amoeba</name>
    <dbReference type="NCBI Taxonomy" id="44689"/>
    <lineage>
        <taxon>Eukaryota</taxon>
        <taxon>Amoebozoa</taxon>
        <taxon>Evosea</taxon>
        <taxon>Eumycetozoa</taxon>
        <taxon>Dictyostelia</taxon>
        <taxon>Dictyosteliales</taxon>
        <taxon>Dictyosteliaceae</taxon>
        <taxon>Dictyostelium</taxon>
    </lineage>
</organism>
<name>CYTA1_DICDI</name>
<keyword id="KW-0963">Cytoplasm</keyword>
<keyword id="KW-0646">Protease inhibitor</keyword>
<keyword id="KW-1185">Reference proteome</keyword>
<keyword id="KW-0789">Thiol protease inhibitor</keyword>
<reference key="1">
    <citation type="journal article" date="2004" name="Biol. Chem.">
        <title>Identification of cysteine protease inhibitors that belong to cystatin family 1 in the cellular slime mold Dictyostelium discoideum.</title>
        <authorList>
            <person name="El-Halawany M.S."/>
            <person name="Ohkouchi S."/>
            <person name="Shibata H."/>
            <person name="Hitomi K."/>
            <person name="Maki M."/>
        </authorList>
    </citation>
    <scope>NUCLEOTIDE SEQUENCE [MRNA]</scope>
    <scope>FUNCTION</scope>
    <scope>SUBCELLULAR LOCATION</scope>
    <scope>DEVELOPMENTAL STAGE</scope>
    <source>
        <strain>AX4</strain>
    </source>
</reference>
<reference key="2">
    <citation type="journal article" date="2005" name="Nature">
        <title>The genome of the social amoeba Dictyostelium discoideum.</title>
        <authorList>
            <person name="Eichinger L."/>
            <person name="Pachebat J.A."/>
            <person name="Gloeckner G."/>
            <person name="Rajandream M.A."/>
            <person name="Sucgang R."/>
            <person name="Berriman M."/>
            <person name="Song J."/>
            <person name="Olsen R."/>
            <person name="Szafranski K."/>
            <person name="Xu Q."/>
            <person name="Tunggal B."/>
            <person name="Kummerfeld S."/>
            <person name="Madera M."/>
            <person name="Konfortov B.A."/>
            <person name="Rivero F."/>
            <person name="Bankier A.T."/>
            <person name="Lehmann R."/>
            <person name="Hamlin N."/>
            <person name="Davies R."/>
            <person name="Gaudet P."/>
            <person name="Fey P."/>
            <person name="Pilcher K."/>
            <person name="Chen G."/>
            <person name="Saunders D."/>
            <person name="Sodergren E.J."/>
            <person name="Davis P."/>
            <person name="Kerhornou A."/>
            <person name="Nie X."/>
            <person name="Hall N."/>
            <person name="Anjard C."/>
            <person name="Hemphill L."/>
            <person name="Bason N."/>
            <person name="Farbrother P."/>
            <person name="Desany B."/>
            <person name="Just E."/>
            <person name="Morio T."/>
            <person name="Rost R."/>
            <person name="Churcher C.M."/>
            <person name="Cooper J."/>
            <person name="Haydock S."/>
            <person name="van Driessche N."/>
            <person name="Cronin A."/>
            <person name="Goodhead I."/>
            <person name="Muzny D.M."/>
            <person name="Mourier T."/>
            <person name="Pain A."/>
            <person name="Lu M."/>
            <person name="Harper D."/>
            <person name="Lindsay R."/>
            <person name="Hauser H."/>
            <person name="James K.D."/>
            <person name="Quiles M."/>
            <person name="Madan Babu M."/>
            <person name="Saito T."/>
            <person name="Buchrieser C."/>
            <person name="Wardroper A."/>
            <person name="Felder M."/>
            <person name="Thangavelu M."/>
            <person name="Johnson D."/>
            <person name="Knights A."/>
            <person name="Loulseged H."/>
            <person name="Mungall K.L."/>
            <person name="Oliver K."/>
            <person name="Price C."/>
            <person name="Quail M.A."/>
            <person name="Urushihara H."/>
            <person name="Hernandez J."/>
            <person name="Rabbinowitsch E."/>
            <person name="Steffen D."/>
            <person name="Sanders M."/>
            <person name="Ma J."/>
            <person name="Kohara Y."/>
            <person name="Sharp S."/>
            <person name="Simmonds M.N."/>
            <person name="Spiegler S."/>
            <person name="Tivey A."/>
            <person name="Sugano S."/>
            <person name="White B."/>
            <person name="Walker D."/>
            <person name="Woodward J.R."/>
            <person name="Winckler T."/>
            <person name="Tanaka Y."/>
            <person name="Shaulsky G."/>
            <person name="Schleicher M."/>
            <person name="Weinstock G.M."/>
            <person name="Rosenthal A."/>
            <person name="Cox E.C."/>
            <person name="Chisholm R.L."/>
            <person name="Gibbs R.A."/>
            <person name="Loomis W.F."/>
            <person name="Platzer M."/>
            <person name="Kay R.R."/>
            <person name="Williams J.G."/>
            <person name="Dear P.H."/>
            <person name="Noegel A.A."/>
            <person name="Barrell B.G."/>
            <person name="Kuspa A."/>
        </authorList>
    </citation>
    <scope>NUCLEOTIDE SEQUENCE [LARGE SCALE GENOMIC DNA]</scope>
    <source>
        <strain>AX4</strain>
    </source>
</reference>
<accession>Q65YR8</accession>
<accession>Q54E27</accession>
<proteinExistence type="evidence at transcript level"/>
<sequence>MTLGGLKPEVHAANDEIRQVVAKVADELKSKLNTTEVEPVSYKTQLVAGTNYFIKVKTPAGFAHARVYKDLQQNHSVHSVKADGITEESEIVYF</sequence>
<comment type="function">
    <text evidence="2">Intracellular thiol proteinase inhibitor. Inhibits papain, but not cathepsin B.</text>
</comment>
<comment type="subcellular location">
    <subcellularLocation>
        <location evidence="2">Cytoplasm</location>
    </subcellularLocation>
</comment>
<comment type="developmental stage">
    <text evidence="2">Stably expressed throughout development.</text>
</comment>
<comment type="similarity">
    <text evidence="3">Belongs to the cystatin family.</text>
</comment>
<dbReference type="EMBL" id="AB189918">
    <property type="protein sequence ID" value="BAD44693.1"/>
    <property type="molecule type" value="mRNA"/>
</dbReference>
<dbReference type="EMBL" id="AAFI02000185">
    <property type="protein sequence ID" value="EAL61538.1"/>
    <property type="molecule type" value="Genomic_DNA"/>
</dbReference>
<dbReference type="RefSeq" id="XP_629960.1">
    <property type="nucleotide sequence ID" value="XM_629958.1"/>
</dbReference>
<dbReference type="SMR" id="Q65YR8"/>
<dbReference type="BioGRID" id="1253369">
    <property type="interactions" value="1"/>
</dbReference>
<dbReference type="STRING" id="44689.Q65YR8"/>
<dbReference type="PaxDb" id="44689-DDB0220657"/>
<dbReference type="EnsemblProtists" id="EAL61538">
    <property type="protein sequence ID" value="EAL61538"/>
    <property type="gene ID" value="DDB_G0291834"/>
</dbReference>
<dbReference type="GeneID" id="8628366"/>
<dbReference type="KEGG" id="ddi:DDB_G0291834"/>
<dbReference type="dictyBase" id="DDB_G0291834">
    <property type="gene designation" value="cpiA"/>
</dbReference>
<dbReference type="VEuPathDB" id="AmoebaDB:DDB_G0291834"/>
<dbReference type="eggNOG" id="ENOG502RIJB">
    <property type="taxonomic scope" value="Eukaryota"/>
</dbReference>
<dbReference type="HOGENOM" id="CLU_150234_2_0_1"/>
<dbReference type="InParanoid" id="Q65YR8"/>
<dbReference type="OMA" id="DNRYMHL"/>
<dbReference type="PhylomeDB" id="Q65YR8"/>
<dbReference type="Reactome" id="R-DDI-6798695">
    <property type="pathway name" value="Neutrophil degranulation"/>
</dbReference>
<dbReference type="PRO" id="PR:Q65YR8"/>
<dbReference type="Proteomes" id="UP000002195">
    <property type="component" value="Chromosome 6"/>
</dbReference>
<dbReference type="GO" id="GO:0005829">
    <property type="term" value="C:cytosol"/>
    <property type="evidence" value="ECO:0000314"/>
    <property type="project" value="dictyBase"/>
</dbReference>
<dbReference type="GO" id="GO:0045335">
    <property type="term" value="C:phagocytic vesicle"/>
    <property type="evidence" value="ECO:0007005"/>
    <property type="project" value="dictyBase"/>
</dbReference>
<dbReference type="GO" id="GO:0031982">
    <property type="term" value="C:vesicle"/>
    <property type="evidence" value="ECO:0000314"/>
    <property type="project" value="dictyBase"/>
</dbReference>
<dbReference type="GO" id="GO:0004869">
    <property type="term" value="F:cysteine-type endopeptidase inhibitor activity"/>
    <property type="evidence" value="ECO:0000314"/>
    <property type="project" value="dictyBase"/>
</dbReference>
<dbReference type="GO" id="GO:0140582">
    <property type="term" value="P:adenylate cyclase-activating G protein-coupled cAMP receptor signaling pathway"/>
    <property type="evidence" value="ECO:0000314"/>
    <property type="project" value="dictyBase"/>
</dbReference>
<dbReference type="GO" id="GO:0030162">
    <property type="term" value="P:regulation of proteolysis"/>
    <property type="evidence" value="ECO:0000314"/>
    <property type="project" value="dictyBase"/>
</dbReference>
<dbReference type="GO" id="GO:0009617">
    <property type="term" value="P:response to bacterium"/>
    <property type="evidence" value="ECO:0007007"/>
    <property type="project" value="dictyBase"/>
</dbReference>
<dbReference type="Gene3D" id="3.10.450.10">
    <property type="match status" value="1"/>
</dbReference>
<dbReference type="InterPro" id="IPR000010">
    <property type="entry name" value="Cystatin_dom"/>
</dbReference>
<dbReference type="InterPro" id="IPR046350">
    <property type="entry name" value="Cystatin_sf"/>
</dbReference>
<dbReference type="InterPro" id="IPR018073">
    <property type="entry name" value="Prot_inh_cystat_CS"/>
</dbReference>
<dbReference type="InterPro" id="IPR001713">
    <property type="entry name" value="Prot_inh_stefin"/>
</dbReference>
<dbReference type="PANTHER" id="PTHR11414:SF21">
    <property type="entry name" value="CYSTATIN 14A, TANDEM DUPLICATE 1-RELATED"/>
    <property type="match status" value="1"/>
</dbReference>
<dbReference type="PANTHER" id="PTHR11414">
    <property type="entry name" value="CYSTATIN FAMILY MEMBER"/>
    <property type="match status" value="1"/>
</dbReference>
<dbReference type="Pfam" id="PF00031">
    <property type="entry name" value="Cystatin"/>
    <property type="match status" value="1"/>
</dbReference>
<dbReference type="SUPFAM" id="SSF54403">
    <property type="entry name" value="Cystatin/monellin"/>
    <property type="match status" value="1"/>
</dbReference>
<dbReference type="PROSITE" id="PS00287">
    <property type="entry name" value="CYSTATIN"/>
    <property type="match status" value="1"/>
</dbReference>
<protein>
    <recommendedName>
        <fullName>Cystatin-A1</fullName>
    </recommendedName>
</protein>